<accession>Q5XBY0</accession>
<evidence type="ECO:0000255" key="1">
    <source>
        <dbReference type="HAMAP-Rule" id="MF_01041"/>
    </source>
</evidence>
<evidence type="ECO:0000305" key="2"/>
<dbReference type="EMBL" id="CP000003">
    <property type="protein sequence ID" value="AAT87083.1"/>
    <property type="status" value="ALT_INIT"/>
    <property type="molecule type" value="Genomic_DNA"/>
</dbReference>
<dbReference type="RefSeq" id="WP_002984497.1">
    <property type="nucleotide sequence ID" value="NC_006086.1"/>
</dbReference>
<dbReference type="SMR" id="Q5XBY0"/>
<dbReference type="KEGG" id="spa:M6_Spy0948"/>
<dbReference type="HOGENOM" id="CLU_166693_0_0_9"/>
<dbReference type="Proteomes" id="UP000001167">
    <property type="component" value="Chromosome"/>
</dbReference>
<dbReference type="Gene3D" id="1.10.220.80">
    <property type="entry name" value="BH2638-like"/>
    <property type="match status" value="1"/>
</dbReference>
<dbReference type="HAMAP" id="MF_01041">
    <property type="entry name" value="UPF0223"/>
    <property type="match status" value="1"/>
</dbReference>
<dbReference type="InterPro" id="IPR023324">
    <property type="entry name" value="BH2638-like_sf"/>
</dbReference>
<dbReference type="InterPro" id="IPR007920">
    <property type="entry name" value="UPF0223"/>
</dbReference>
<dbReference type="NCBIfam" id="NF003353">
    <property type="entry name" value="PRK04387.1"/>
    <property type="match status" value="1"/>
</dbReference>
<dbReference type="Pfam" id="PF05256">
    <property type="entry name" value="UPF0223"/>
    <property type="match status" value="1"/>
</dbReference>
<dbReference type="PIRSF" id="PIRSF037260">
    <property type="entry name" value="UPF0223"/>
    <property type="match status" value="1"/>
</dbReference>
<dbReference type="SUPFAM" id="SSF158504">
    <property type="entry name" value="BH2638-like"/>
    <property type="match status" value="1"/>
</dbReference>
<reference key="1">
    <citation type="journal article" date="2004" name="J. Infect. Dis.">
        <title>Progress toward characterization of the group A Streptococcus metagenome: complete genome sequence of a macrolide-resistant serotype M6 strain.</title>
        <authorList>
            <person name="Banks D.J."/>
            <person name="Porcella S.F."/>
            <person name="Barbian K.D."/>
            <person name="Beres S.B."/>
            <person name="Philips L.E."/>
            <person name="Voyich J.M."/>
            <person name="DeLeo F.R."/>
            <person name="Martin J.M."/>
            <person name="Somerville G.A."/>
            <person name="Musser J.M."/>
        </authorList>
    </citation>
    <scope>NUCLEOTIDE SEQUENCE [LARGE SCALE GENOMIC DNA]</scope>
    <source>
        <strain>ATCC BAA-946 / MGAS10394</strain>
    </source>
</reference>
<gene>
    <name type="ordered locus">M6_Spy0948</name>
</gene>
<proteinExistence type="inferred from homology"/>
<comment type="similarity">
    <text evidence="1">Belongs to the UPF0223 family.</text>
</comment>
<comment type="sequence caution" evidence="2">
    <conflict type="erroneous initiation">
        <sequence resource="EMBL-CDS" id="AAT87083"/>
    </conflict>
</comment>
<protein>
    <recommendedName>
        <fullName evidence="1">UPF0223 protein M6_Spy0948</fullName>
    </recommendedName>
</protein>
<feature type="chain" id="PRO_0000216700" description="UPF0223 protein M6_Spy0948">
    <location>
        <begin position="1"/>
        <end position="92"/>
    </location>
</feature>
<organism>
    <name type="scientific">Streptococcus pyogenes serotype M6 (strain ATCC BAA-946 / MGAS10394)</name>
    <dbReference type="NCBI Taxonomy" id="286636"/>
    <lineage>
        <taxon>Bacteria</taxon>
        <taxon>Bacillati</taxon>
        <taxon>Bacillota</taxon>
        <taxon>Bacilli</taxon>
        <taxon>Lactobacillales</taxon>
        <taxon>Streptococcaceae</taxon>
        <taxon>Streptococcus</taxon>
    </lineage>
</organism>
<name>Y948_STRP6</name>
<sequence length="92" mass="10658">MSGNYYYPLDLSWSTEEISSVLHFLNKVELAYEKKVDAKQLLDSYKTYKTIVKSKAQEKQIDRDFQKVSGYSTYQVVKKAKAIEKGFFSLGN</sequence>